<organism>
    <name type="scientific">Staphylococcus aureus (strain MSSA476)</name>
    <dbReference type="NCBI Taxonomy" id="282459"/>
    <lineage>
        <taxon>Bacteria</taxon>
        <taxon>Bacillati</taxon>
        <taxon>Bacillota</taxon>
        <taxon>Bacilli</taxon>
        <taxon>Bacillales</taxon>
        <taxon>Staphylococcaceae</taxon>
        <taxon>Staphylococcus</taxon>
    </lineage>
</organism>
<keyword id="KW-0067">ATP-binding</keyword>
<keyword id="KW-1003">Cell membrane</keyword>
<keyword id="KW-0418">Kinase</keyword>
<keyword id="KW-0472">Membrane</keyword>
<keyword id="KW-0479">Metal-binding</keyword>
<keyword id="KW-0547">Nucleotide-binding</keyword>
<keyword id="KW-0597">Phosphoprotein</keyword>
<keyword id="KW-0808">Transferase</keyword>
<keyword id="KW-0812">Transmembrane</keyword>
<keyword id="KW-1133">Transmembrane helix</keyword>
<keyword id="KW-0902">Two-component regulatory system</keyword>
<keyword id="KW-0862">Zinc</keyword>
<feature type="chain" id="PRO_0000353056" description="Sensor protein kinase WalK">
    <location>
        <begin position="1"/>
        <end position="608"/>
    </location>
</feature>
<feature type="transmembrane region" description="Helical" evidence="4">
    <location>
        <begin position="14"/>
        <end position="34"/>
    </location>
</feature>
<feature type="transmembrane region" description="Helical" evidence="4">
    <location>
        <begin position="183"/>
        <end position="203"/>
    </location>
</feature>
<feature type="domain" description="HAMP" evidence="5">
    <location>
        <begin position="204"/>
        <end position="256"/>
    </location>
</feature>
<feature type="domain" description="PAS" evidence="7">
    <location>
        <begin position="261"/>
        <end position="331"/>
    </location>
</feature>
<feature type="domain" description="PAC" evidence="8">
    <location>
        <begin position="314"/>
        <end position="378"/>
    </location>
</feature>
<feature type="domain" description="Histidine kinase" evidence="6">
    <location>
        <begin position="382"/>
        <end position="600"/>
    </location>
</feature>
<feature type="binding site" evidence="3">
    <location>
        <position position="271"/>
    </location>
    <ligand>
        <name>Zn(2+)</name>
        <dbReference type="ChEBI" id="CHEBI:29105"/>
    </ligand>
</feature>
<feature type="binding site" evidence="3">
    <location>
        <position position="274"/>
    </location>
    <ligand>
        <name>Zn(2+)</name>
        <dbReference type="ChEBI" id="CHEBI:29105"/>
    </ligand>
</feature>
<feature type="binding site" evidence="3">
    <location>
        <position position="364"/>
    </location>
    <ligand>
        <name>Zn(2+)</name>
        <dbReference type="ChEBI" id="CHEBI:29105"/>
    </ligand>
</feature>
<feature type="binding site" evidence="3">
    <location>
        <position position="368"/>
    </location>
    <ligand>
        <name>Zn(2+)</name>
        <dbReference type="ChEBI" id="CHEBI:29105"/>
    </ligand>
</feature>
<feature type="modified residue" description="Phosphohistidine; by autocatalysis" evidence="6">
    <location>
        <position position="385"/>
    </location>
</feature>
<dbReference type="EC" id="2.7.13.3" evidence="1"/>
<dbReference type="EMBL" id="BX571857">
    <property type="protein sequence ID" value="CAG41791.1"/>
    <property type="molecule type" value="Genomic_DNA"/>
</dbReference>
<dbReference type="RefSeq" id="WP_000871607.1">
    <property type="nucleotide sequence ID" value="NC_002953.3"/>
</dbReference>
<dbReference type="SMR" id="Q6GD71"/>
<dbReference type="KEGG" id="sas:SAS0019"/>
<dbReference type="HOGENOM" id="CLU_000445_89_2_9"/>
<dbReference type="GO" id="GO:0005886">
    <property type="term" value="C:plasma membrane"/>
    <property type="evidence" value="ECO:0007669"/>
    <property type="project" value="UniProtKB-SubCell"/>
</dbReference>
<dbReference type="GO" id="GO:0005524">
    <property type="term" value="F:ATP binding"/>
    <property type="evidence" value="ECO:0007669"/>
    <property type="project" value="UniProtKB-KW"/>
</dbReference>
<dbReference type="GO" id="GO:0046872">
    <property type="term" value="F:metal ion binding"/>
    <property type="evidence" value="ECO:0007669"/>
    <property type="project" value="UniProtKB-KW"/>
</dbReference>
<dbReference type="GO" id="GO:0000156">
    <property type="term" value="F:phosphorelay response regulator activity"/>
    <property type="evidence" value="ECO:0007669"/>
    <property type="project" value="TreeGrafter"/>
</dbReference>
<dbReference type="GO" id="GO:0000155">
    <property type="term" value="F:phosphorelay sensor kinase activity"/>
    <property type="evidence" value="ECO:0007669"/>
    <property type="project" value="InterPro"/>
</dbReference>
<dbReference type="GO" id="GO:0030295">
    <property type="term" value="F:protein kinase activator activity"/>
    <property type="evidence" value="ECO:0007669"/>
    <property type="project" value="TreeGrafter"/>
</dbReference>
<dbReference type="GO" id="GO:0007234">
    <property type="term" value="P:osmosensory signaling via phosphorelay pathway"/>
    <property type="evidence" value="ECO:0007669"/>
    <property type="project" value="TreeGrafter"/>
</dbReference>
<dbReference type="CDD" id="cd06225">
    <property type="entry name" value="HAMP"/>
    <property type="match status" value="1"/>
</dbReference>
<dbReference type="CDD" id="cd00075">
    <property type="entry name" value="HATPase"/>
    <property type="match status" value="1"/>
</dbReference>
<dbReference type="CDD" id="cd00082">
    <property type="entry name" value="HisKA"/>
    <property type="match status" value="1"/>
</dbReference>
<dbReference type="CDD" id="cd00130">
    <property type="entry name" value="PAS"/>
    <property type="match status" value="1"/>
</dbReference>
<dbReference type="FunFam" id="1.10.8.500:FF:000001">
    <property type="entry name" value="Cell wall metabolism sensor histidine kinase"/>
    <property type="match status" value="1"/>
</dbReference>
<dbReference type="FunFam" id="3.30.450.20:FF:000037">
    <property type="entry name" value="Cell wall metabolism sensor histidine kinase"/>
    <property type="match status" value="1"/>
</dbReference>
<dbReference type="FunFam" id="3.30.565.10:FF:000006">
    <property type="entry name" value="Sensor histidine kinase WalK"/>
    <property type="match status" value="1"/>
</dbReference>
<dbReference type="FunFam" id="1.10.287.130:FF:000001">
    <property type="entry name" value="Two-component sensor histidine kinase"/>
    <property type="match status" value="1"/>
</dbReference>
<dbReference type="Gene3D" id="1.10.287.130">
    <property type="match status" value="1"/>
</dbReference>
<dbReference type="Gene3D" id="1.10.8.500">
    <property type="entry name" value="HAMP domain in histidine kinase"/>
    <property type="match status" value="1"/>
</dbReference>
<dbReference type="Gene3D" id="3.30.565.10">
    <property type="entry name" value="Histidine kinase-like ATPase, C-terminal domain"/>
    <property type="match status" value="1"/>
</dbReference>
<dbReference type="Gene3D" id="3.30.450.20">
    <property type="entry name" value="PAS domain"/>
    <property type="match status" value="2"/>
</dbReference>
<dbReference type="InterPro" id="IPR003660">
    <property type="entry name" value="HAMP_dom"/>
</dbReference>
<dbReference type="InterPro" id="IPR036890">
    <property type="entry name" value="HATPase_C_sf"/>
</dbReference>
<dbReference type="InterPro" id="IPR005467">
    <property type="entry name" value="His_kinase_dom"/>
</dbReference>
<dbReference type="InterPro" id="IPR003661">
    <property type="entry name" value="HisK_dim/P_dom"/>
</dbReference>
<dbReference type="InterPro" id="IPR036097">
    <property type="entry name" value="HisK_dim/P_sf"/>
</dbReference>
<dbReference type="InterPro" id="IPR052545">
    <property type="entry name" value="Light-responsive_reg"/>
</dbReference>
<dbReference type="InterPro" id="IPR000014">
    <property type="entry name" value="PAS"/>
</dbReference>
<dbReference type="InterPro" id="IPR000700">
    <property type="entry name" value="PAS-assoc_C"/>
</dbReference>
<dbReference type="InterPro" id="IPR035965">
    <property type="entry name" value="PAS-like_dom_sf"/>
</dbReference>
<dbReference type="InterPro" id="IPR049814">
    <property type="entry name" value="Resp_reg_WalK"/>
</dbReference>
<dbReference type="InterPro" id="IPR029151">
    <property type="entry name" value="Sensor-like_sf"/>
</dbReference>
<dbReference type="InterPro" id="IPR004358">
    <property type="entry name" value="Sig_transdc_His_kin-like_C"/>
</dbReference>
<dbReference type="NCBIfam" id="NF033092">
    <property type="entry name" value="HK_WalK"/>
    <property type="match status" value="1"/>
</dbReference>
<dbReference type="NCBIfam" id="TIGR00229">
    <property type="entry name" value="sensory_box"/>
    <property type="match status" value="1"/>
</dbReference>
<dbReference type="PANTHER" id="PTHR42878:SF7">
    <property type="entry name" value="SENSOR HISTIDINE KINASE GLRK"/>
    <property type="match status" value="1"/>
</dbReference>
<dbReference type="PANTHER" id="PTHR42878">
    <property type="entry name" value="TWO-COMPONENT HISTIDINE KINASE"/>
    <property type="match status" value="1"/>
</dbReference>
<dbReference type="Pfam" id="PF23846">
    <property type="entry name" value="Cache_WalK"/>
    <property type="match status" value="1"/>
</dbReference>
<dbReference type="Pfam" id="PF00672">
    <property type="entry name" value="HAMP"/>
    <property type="match status" value="1"/>
</dbReference>
<dbReference type="Pfam" id="PF02518">
    <property type="entry name" value="HATPase_c"/>
    <property type="match status" value="1"/>
</dbReference>
<dbReference type="Pfam" id="PF00512">
    <property type="entry name" value="HisKA"/>
    <property type="match status" value="1"/>
</dbReference>
<dbReference type="Pfam" id="PF13426">
    <property type="entry name" value="PAS_9"/>
    <property type="match status" value="1"/>
</dbReference>
<dbReference type="PRINTS" id="PR00344">
    <property type="entry name" value="BCTRLSENSOR"/>
</dbReference>
<dbReference type="SMART" id="SM00304">
    <property type="entry name" value="HAMP"/>
    <property type="match status" value="1"/>
</dbReference>
<dbReference type="SMART" id="SM00387">
    <property type="entry name" value="HATPase_c"/>
    <property type="match status" value="1"/>
</dbReference>
<dbReference type="SMART" id="SM00388">
    <property type="entry name" value="HisKA"/>
    <property type="match status" value="1"/>
</dbReference>
<dbReference type="SMART" id="SM00091">
    <property type="entry name" value="PAS"/>
    <property type="match status" value="1"/>
</dbReference>
<dbReference type="SUPFAM" id="SSF55874">
    <property type="entry name" value="ATPase domain of HSP90 chaperone/DNA topoisomerase II/histidine kinase"/>
    <property type="match status" value="1"/>
</dbReference>
<dbReference type="SUPFAM" id="SSF158472">
    <property type="entry name" value="HAMP domain-like"/>
    <property type="match status" value="1"/>
</dbReference>
<dbReference type="SUPFAM" id="SSF47384">
    <property type="entry name" value="Homodimeric domain of signal transducing histidine kinase"/>
    <property type="match status" value="1"/>
</dbReference>
<dbReference type="SUPFAM" id="SSF55785">
    <property type="entry name" value="PYP-like sensor domain (PAS domain)"/>
    <property type="match status" value="1"/>
</dbReference>
<dbReference type="SUPFAM" id="SSF103190">
    <property type="entry name" value="Sensory domain-like"/>
    <property type="match status" value="1"/>
</dbReference>
<dbReference type="PROSITE" id="PS50885">
    <property type="entry name" value="HAMP"/>
    <property type="match status" value="1"/>
</dbReference>
<dbReference type="PROSITE" id="PS50109">
    <property type="entry name" value="HIS_KIN"/>
    <property type="match status" value="1"/>
</dbReference>
<dbReference type="PROSITE" id="PS50113">
    <property type="entry name" value="PAC"/>
    <property type="match status" value="1"/>
</dbReference>
<dbReference type="PROSITE" id="PS50112">
    <property type="entry name" value="PAS"/>
    <property type="match status" value="1"/>
</dbReference>
<comment type="function">
    <text evidence="3">Member of the two-component regulatory system WalK/WalR that regulates genes involved in cell wall metabolism, virulence regulation, biofilm production, oxidative stress resistance and antibiotic resistance via direct or indirect regulation of autolysins. Functions as a sensor protein kinase which is autophosphorylated at a histidine residue in the dimerization domain and transfers its phosphate group to the conserved aspartic acid residue in the regulatory domain of WalR. In turn, WalR binds to the upstream promoter regions of the target genes to positively and negatively regulate their expression.</text>
</comment>
<comment type="catalytic activity">
    <reaction evidence="3">
        <text>ATP + protein L-histidine = ADP + protein N-phospho-L-histidine.</text>
        <dbReference type="EC" id="2.7.13.3"/>
    </reaction>
</comment>
<comment type="activity regulation">
    <text evidence="3">By zinc. Zinc-binding negatively regulates WalK kinase activity and thus autophosphorylation.</text>
</comment>
<comment type="subunit">
    <text evidence="2">Forms homodimers. Forms homooligomers.</text>
</comment>
<comment type="subcellular location">
    <subcellularLocation>
        <location evidence="9">Cell membrane</location>
        <topology evidence="4">Multi-pass membrane protein</topology>
    </subcellularLocation>
</comment>
<comment type="PTM">
    <text evidence="3">Autophosphorylated.</text>
</comment>
<protein>
    <recommendedName>
        <fullName evidence="9">Sensor protein kinase WalK</fullName>
        <ecNumber evidence="1">2.7.13.3</ecNumber>
    </recommendedName>
</protein>
<gene>
    <name type="primary">walK</name>
    <name type="ordered locus">SAS0019</name>
</gene>
<proteinExistence type="inferred from homology"/>
<reference key="1">
    <citation type="journal article" date="2004" name="Proc. Natl. Acad. Sci. U.S.A.">
        <title>Complete genomes of two clinical Staphylococcus aureus strains: evidence for the rapid evolution of virulence and drug resistance.</title>
        <authorList>
            <person name="Holden M.T.G."/>
            <person name="Feil E.J."/>
            <person name="Lindsay J.A."/>
            <person name="Peacock S.J."/>
            <person name="Day N.P.J."/>
            <person name="Enright M.C."/>
            <person name="Foster T.J."/>
            <person name="Moore C.E."/>
            <person name="Hurst L."/>
            <person name="Atkin R."/>
            <person name="Barron A."/>
            <person name="Bason N."/>
            <person name="Bentley S.D."/>
            <person name="Chillingworth C."/>
            <person name="Chillingworth T."/>
            <person name="Churcher C."/>
            <person name="Clark L."/>
            <person name="Corton C."/>
            <person name="Cronin A."/>
            <person name="Doggett J."/>
            <person name="Dowd L."/>
            <person name="Feltwell T."/>
            <person name="Hance Z."/>
            <person name="Harris B."/>
            <person name="Hauser H."/>
            <person name="Holroyd S."/>
            <person name="Jagels K."/>
            <person name="James K.D."/>
            <person name="Lennard N."/>
            <person name="Line A."/>
            <person name="Mayes R."/>
            <person name="Moule S."/>
            <person name="Mungall K."/>
            <person name="Ormond D."/>
            <person name="Quail M.A."/>
            <person name="Rabbinowitsch E."/>
            <person name="Rutherford K.M."/>
            <person name="Sanders M."/>
            <person name="Sharp S."/>
            <person name="Simmonds M."/>
            <person name="Stevens K."/>
            <person name="Whitehead S."/>
            <person name="Barrell B.G."/>
            <person name="Spratt B.G."/>
            <person name="Parkhill J."/>
        </authorList>
    </citation>
    <scope>NUCLEOTIDE SEQUENCE [LARGE SCALE GENOMIC DNA]</scope>
    <source>
        <strain>MSSA476</strain>
    </source>
</reference>
<accession>Q6GD71</accession>
<sequence length="608" mass="69924">MKWLKQLQSLHTKLVIVYVLLIIIGMQIIGLYFTNNLEKELLDNFKKNITQYAKQLEISIEKVYDEKGSVNAQKDIQNLLSEYANRQEIGEIRFIDKDQIIIATTKQSNRSLINQKANDSSVQKALSLGQSNDHLILKDYGGGKDRVWVYNIPVKVDKKVIGNIYIESKINDVYNQLNNINQIFIVGTAISLLITVILGFFIARTITKPITDMRNQTVEMSRGNYTQRVKIYGNDEIGELALAFNNLSKRVQEAQANTESEKRRLDSVITHMSDGIIATDRRGRIRIVNDMALKMLGMAKEDIIGYYMLSVLSLEDEFKLEEIQENNDSFLLDLNEEEGLIARVNFSTIVQETGFVTGYIAVLHDVTEQQQVERERREFVANVSHELRTPLTSMNSYIEALEEGAWKDEELAPQFLSVTREETERMIRLVNDLLQLSKMDNESDQINKEIIDFNMFINKIINRHEMSAKDTTFIRDIPKKTIFTEFDPDKMTQVFDNVITNAMKYSRGDKRVEFHVKQNPLYNRMTIRIKDNGIGIPINKVDKIFDRFYRVDKARTRKMGGTGLGLAISKEIVEAHNGRIWANSVEGQGTSIFITLPCEVIEDGDWDE</sequence>
<name>WALK_STAAS</name>
<evidence type="ECO:0000250" key="1">
    <source>
        <dbReference type="UniProtKB" id="O34206"/>
    </source>
</evidence>
<evidence type="ECO:0000250" key="2">
    <source>
        <dbReference type="UniProtKB" id="Q2G2U4"/>
    </source>
</evidence>
<evidence type="ECO:0000250" key="3">
    <source>
        <dbReference type="UniProtKB" id="Q9RDT3"/>
    </source>
</evidence>
<evidence type="ECO:0000255" key="4"/>
<evidence type="ECO:0000255" key="5">
    <source>
        <dbReference type="PROSITE-ProRule" id="PRU00102"/>
    </source>
</evidence>
<evidence type="ECO:0000255" key="6">
    <source>
        <dbReference type="PROSITE-ProRule" id="PRU00107"/>
    </source>
</evidence>
<evidence type="ECO:0000255" key="7">
    <source>
        <dbReference type="PROSITE-ProRule" id="PRU00140"/>
    </source>
</evidence>
<evidence type="ECO:0000255" key="8">
    <source>
        <dbReference type="PROSITE-ProRule" id="PRU00141"/>
    </source>
</evidence>
<evidence type="ECO:0000305" key="9"/>